<accession>Q8CG80</accession>
<accession>A2AQ90</accession>
<accession>A2AQ91</accession>
<keyword id="KW-0025">Alternative splicing</keyword>
<keyword id="KW-0053">Apoptosis</keyword>
<keyword id="KW-0597">Phosphoprotein</keyword>
<keyword id="KW-1185">Reference proteome</keyword>
<keyword id="KW-0727">SH2 domain</keyword>
<organism>
    <name type="scientific">Mus musculus</name>
    <name type="common">Mouse</name>
    <dbReference type="NCBI Taxonomy" id="10090"/>
    <lineage>
        <taxon>Eukaryota</taxon>
        <taxon>Metazoa</taxon>
        <taxon>Chordata</taxon>
        <taxon>Craniata</taxon>
        <taxon>Vertebrata</taxon>
        <taxon>Euteleostomi</taxon>
        <taxon>Mammalia</taxon>
        <taxon>Eutheria</taxon>
        <taxon>Euarchontoglires</taxon>
        <taxon>Glires</taxon>
        <taxon>Rodentia</taxon>
        <taxon>Myomorpha</taxon>
        <taxon>Muroidea</taxon>
        <taxon>Muridae</taxon>
        <taxon>Murinae</taxon>
        <taxon>Mus</taxon>
        <taxon>Mus</taxon>
    </lineage>
</organism>
<proteinExistence type="evidence at protein level"/>
<feature type="chain" id="PRO_0000322559" description="SH2 domain-containing adapter protein F">
    <location>
        <begin position="1"/>
        <end position="238"/>
    </location>
</feature>
<feature type="domain" description="SH2" evidence="2">
    <location>
        <begin position="138"/>
        <end position="233"/>
    </location>
</feature>
<feature type="region of interest" description="Disordered" evidence="3">
    <location>
        <begin position="1"/>
        <end position="70"/>
    </location>
</feature>
<feature type="region of interest" description="Disordered" evidence="3">
    <location>
        <begin position="85"/>
        <end position="121"/>
    </location>
</feature>
<feature type="compositionally biased region" description="Acidic residues" evidence="3">
    <location>
        <begin position="55"/>
        <end position="66"/>
    </location>
</feature>
<feature type="modified residue" description="Phosphoserine" evidence="9">
    <location>
        <position position="39"/>
    </location>
</feature>
<feature type="modified residue" description="Phosphotyrosine" evidence="8">
    <location>
        <position position="64"/>
    </location>
</feature>
<feature type="splice variant" id="VSP_052700" description="In isoform 2." evidence="5">
    <original>MEPYEAQKMMA</original>
    <variation>MQKHR</variation>
    <location>
        <begin position="1"/>
        <end position="11"/>
    </location>
</feature>
<feature type="sequence conflict" description="In Ref. 2; AAH42839." evidence="5" ref="2">
    <original>E</original>
    <variation>EK</variation>
    <location>
        <position position="87"/>
    </location>
</feature>
<comment type="function">
    <text evidence="1">Adapter protein which may play a role in the regulation of apoptosis in response to PDGF.</text>
</comment>
<comment type="subunit">
    <text evidence="1">Interacts with phosphorylated 'Tyr-720' of PDGFRA via its SH2 domain.</text>
</comment>
<comment type="alternative products">
    <event type="alternative splicing"/>
    <isoform>
        <id>Q8CG80-1</id>
        <name evidence="4">1</name>
        <sequence type="displayed"/>
    </isoform>
    <isoform>
        <id>Q8CG80-2</id>
        <name>2</name>
        <sequence type="described" ref="VSP_052700"/>
    </isoform>
    <text evidence="5">Additional isoforms seem to exist.</text>
</comment>
<comment type="PTM">
    <text evidence="1">May become phosphorylated upon binding to PDGFRA.</text>
</comment>
<gene>
    <name evidence="7" type="primary">Shf</name>
</gene>
<evidence type="ECO:0000250" key="1">
    <source>
        <dbReference type="UniProtKB" id="Q7M4L6"/>
    </source>
</evidence>
<evidence type="ECO:0000255" key="2">
    <source>
        <dbReference type="PROSITE-ProRule" id="PRU00191"/>
    </source>
</evidence>
<evidence type="ECO:0000256" key="3">
    <source>
        <dbReference type="SAM" id="MobiDB-lite"/>
    </source>
</evidence>
<evidence type="ECO:0000269" key="4">
    <source>
    </source>
</evidence>
<evidence type="ECO:0000305" key="5"/>
<evidence type="ECO:0000312" key="6">
    <source>
        <dbReference type="EMBL" id="AAH42839.1"/>
    </source>
</evidence>
<evidence type="ECO:0000312" key="7">
    <source>
        <dbReference type="MGI" id="MGI:3613669"/>
    </source>
</evidence>
<evidence type="ECO:0007744" key="8">
    <source>
    </source>
</evidence>
<evidence type="ECO:0007744" key="9">
    <source>
    </source>
</evidence>
<sequence>MEPYEAQKMMAEIRGSKETAAQPLPLYDTPYEPEDEGASPEGEGTPWPRESRLPEDDERPPEEYDQPWEWKKERISKAFAAQFEGSENCLSPGREEKGRLPPRLSAGNPKSAKPLGMEPSSPLGEWTDPALPLENQVWYHGAISRTDAENLLRLCKEASYLVRNSETSKNDFSLSLKSSQGFMHMKLSRTKEHKYVLGQNSPPFSSVPEIVHHYASRKLPIKGAEHMSLLYPVAIRTL</sequence>
<reference key="1">
    <citation type="journal article" date="2009" name="PLoS Biol.">
        <title>Lineage-specific biology revealed by a finished genome assembly of the mouse.</title>
        <authorList>
            <person name="Church D.M."/>
            <person name="Goodstadt L."/>
            <person name="Hillier L.W."/>
            <person name="Zody M.C."/>
            <person name="Goldstein S."/>
            <person name="She X."/>
            <person name="Bult C.J."/>
            <person name="Agarwala R."/>
            <person name="Cherry J.L."/>
            <person name="DiCuccio M."/>
            <person name="Hlavina W."/>
            <person name="Kapustin Y."/>
            <person name="Meric P."/>
            <person name="Maglott D."/>
            <person name="Birtle Z."/>
            <person name="Marques A.C."/>
            <person name="Graves T."/>
            <person name="Zhou S."/>
            <person name="Teague B."/>
            <person name="Potamousis K."/>
            <person name="Churas C."/>
            <person name="Place M."/>
            <person name="Herschleb J."/>
            <person name="Runnheim R."/>
            <person name="Forrest D."/>
            <person name="Amos-Landgraf J."/>
            <person name="Schwartz D.C."/>
            <person name="Cheng Z."/>
            <person name="Lindblad-Toh K."/>
            <person name="Eichler E.E."/>
            <person name="Ponting C.P."/>
        </authorList>
    </citation>
    <scope>NUCLEOTIDE SEQUENCE [LARGE SCALE GENOMIC DNA]</scope>
    <source>
        <strain>C57BL/6J</strain>
    </source>
</reference>
<reference evidence="6" key="2">
    <citation type="journal article" date="2004" name="Genome Res.">
        <title>The status, quality, and expansion of the NIH full-length cDNA project: the Mammalian Gene Collection (MGC).</title>
        <authorList>
            <consortium name="The MGC Project Team"/>
        </authorList>
    </citation>
    <scope>NUCLEOTIDE SEQUENCE [LARGE SCALE MRNA] (ISOFORM 1)</scope>
    <source>
        <strain evidence="6">FVB/N</strain>
        <tissue evidence="6">Mammary tumor</tissue>
    </source>
</reference>
<reference key="3">
    <citation type="journal article" date="2008" name="J. Proteome Res.">
        <title>Large-scale identification and evolution indexing of tyrosine phosphorylation sites from murine brain.</title>
        <authorList>
            <person name="Ballif B.A."/>
            <person name="Carey G.R."/>
            <person name="Sunyaev S.R."/>
            <person name="Gygi S.P."/>
        </authorList>
    </citation>
    <scope>PHOSPHORYLATION [LARGE SCALE ANALYSIS] AT TYR-64</scope>
    <scope>IDENTIFICATION BY MASS SPECTROMETRY [LARGE SCALE ANALYSIS]</scope>
    <source>
        <tissue>Brain</tissue>
    </source>
</reference>
<reference key="4">
    <citation type="journal article" date="2010" name="Cell">
        <title>A tissue-specific atlas of mouse protein phosphorylation and expression.</title>
        <authorList>
            <person name="Huttlin E.L."/>
            <person name="Jedrychowski M.P."/>
            <person name="Elias J.E."/>
            <person name="Goswami T."/>
            <person name="Rad R."/>
            <person name="Beausoleil S.A."/>
            <person name="Villen J."/>
            <person name="Haas W."/>
            <person name="Sowa M.E."/>
            <person name="Gygi S.P."/>
        </authorList>
    </citation>
    <scope>PHOSPHORYLATION [LARGE SCALE ANALYSIS] AT SER-39</scope>
    <scope>IDENTIFICATION BY MASS SPECTROMETRY [LARGE SCALE ANALYSIS]</scope>
    <source>
        <tissue>Brain</tissue>
    </source>
</reference>
<dbReference type="EMBL" id="AL844566">
    <property type="status" value="NOT_ANNOTATED_CDS"/>
    <property type="molecule type" value="Genomic_DNA"/>
</dbReference>
<dbReference type="EMBL" id="BC042839">
    <property type="protein sequence ID" value="AAH42839.1"/>
    <property type="molecule type" value="mRNA"/>
</dbReference>
<dbReference type="CCDS" id="CCDS16662.1">
    <molecule id="Q8CG80-1"/>
</dbReference>
<dbReference type="RefSeq" id="NP_001013851.2">
    <molecule id="Q8CG80-1"/>
    <property type="nucleotide sequence ID" value="NM_001013829.2"/>
</dbReference>
<dbReference type="SMR" id="Q8CG80"/>
<dbReference type="FunCoup" id="Q8CG80">
    <property type="interactions" value="32"/>
</dbReference>
<dbReference type="STRING" id="10090.ENSMUSP00000106160"/>
<dbReference type="iPTMnet" id="Q8CG80"/>
<dbReference type="PhosphoSitePlus" id="Q8CG80"/>
<dbReference type="PaxDb" id="10090-ENSMUSP00000045135"/>
<dbReference type="ProteomicsDB" id="257001">
    <molecule id="Q8CG80-1"/>
</dbReference>
<dbReference type="ProteomicsDB" id="257002">
    <molecule id="Q8CG80-2"/>
</dbReference>
<dbReference type="Antibodypedia" id="42470">
    <property type="antibodies" value="109 antibodies from 19 providers"/>
</dbReference>
<dbReference type="Ensembl" id="ENSMUST00000048635.13">
    <molecule id="Q8CG80-1"/>
    <property type="protein sequence ID" value="ENSMUSP00000045135.7"/>
    <property type="gene ID" value="ENSMUSG00000033256.15"/>
</dbReference>
<dbReference type="Ensembl" id="ENSMUST00000110530.9">
    <molecule id="Q8CG80-2"/>
    <property type="protein sequence ID" value="ENSMUSP00000106159.3"/>
    <property type="gene ID" value="ENSMUSG00000033256.15"/>
</dbReference>
<dbReference type="Ensembl" id="ENSMUST00000110531.9">
    <molecule id="Q8CG80-1"/>
    <property type="protein sequence ID" value="ENSMUSP00000106160.3"/>
    <property type="gene ID" value="ENSMUSG00000033256.15"/>
</dbReference>
<dbReference type="GeneID" id="435684"/>
<dbReference type="KEGG" id="mmu:435684"/>
<dbReference type="UCSC" id="uc008mar.1">
    <molecule id="Q8CG80-1"/>
    <property type="organism name" value="mouse"/>
</dbReference>
<dbReference type="AGR" id="MGI:3613669"/>
<dbReference type="CTD" id="90525"/>
<dbReference type="MGI" id="MGI:3613669">
    <property type="gene designation" value="Shf"/>
</dbReference>
<dbReference type="VEuPathDB" id="HostDB:ENSMUSG00000033256"/>
<dbReference type="eggNOG" id="ENOG502QTRD">
    <property type="taxonomic scope" value="Eukaryota"/>
</dbReference>
<dbReference type="GeneTree" id="ENSGT00940000159452"/>
<dbReference type="HOGENOM" id="CLU_029444_2_0_1"/>
<dbReference type="InParanoid" id="Q8CG80"/>
<dbReference type="PhylomeDB" id="Q8CG80"/>
<dbReference type="TreeFam" id="TF325799"/>
<dbReference type="BioGRID-ORCS" id="435684">
    <property type="hits" value="2 hits in 77 CRISPR screens"/>
</dbReference>
<dbReference type="PRO" id="PR:Q8CG80"/>
<dbReference type="Proteomes" id="UP000000589">
    <property type="component" value="Chromosome 2"/>
</dbReference>
<dbReference type="RNAct" id="Q8CG80">
    <property type="molecule type" value="protein"/>
</dbReference>
<dbReference type="Bgee" id="ENSMUSG00000033256">
    <property type="expression patterns" value="Expressed in cerebellar cortex and 179 other cell types or tissues"/>
</dbReference>
<dbReference type="ExpressionAtlas" id="Q8CG80">
    <property type="expression patterns" value="baseline and differential"/>
</dbReference>
<dbReference type="GO" id="GO:0006915">
    <property type="term" value="P:apoptotic process"/>
    <property type="evidence" value="ECO:0007669"/>
    <property type="project" value="UniProtKB-KW"/>
</dbReference>
<dbReference type="CDD" id="cd10392">
    <property type="entry name" value="SH2_SHF"/>
    <property type="match status" value="1"/>
</dbReference>
<dbReference type="FunFam" id="3.30.505.10:FF:000021">
    <property type="entry name" value="Putative SH2 domain-containing adapter protein F"/>
    <property type="match status" value="1"/>
</dbReference>
<dbReference type="Gene3D" id="3.30.505.10">
    <property type="entry name" value="SH2 domain"/>
    <property type="match status" value="1"/>
</dbReference>
<dbReference type="InterPro" id="IPR000980">
    <property type="entry name" value="SH2"/>
</dbReference>
<dbReference type="InterPro" id="IPR036860">
    <property type="entry name" value="SH2_dom_sf"/>
</dbReference>
<dbReference type="InterPro" id="IPR051846">
    <property type="entry name" value="SH2_domain_adapters"/>
</dbReference>
<dbReference type="InterPro" id="IPR035044">
    <property type="entry name" value="SHF_SH2"/>
</dbReference>
<dbReference type="PANTHER" id="PTHR15127">
    <property type="entry name" value="HEAVYWEIGHT, ISOFORM A"/>
    <property type="match status" value="1"/>
</dbReference>
<dbReference type="PANTHER" id="PTHR15127:SF28">
    <property type="entry name" value="SH2 DOMAIN-CONTAINING ADAPTER PROTEIN F"/>
    <property type="match status" value="1"/>
</dbReference>
<dbReference type="Pfam" id="PF00017">
    <property type="entry name" value="SH2"/>
    <property type="match status" value="1"/>
</dbReference>
<dbReference type="PRINTS" id="PR00401">
    <property type="entry name" value="SH2DOMAIN"/>
</dbReference>
<dbReference type="SMART" id="SM00252">
    <property type="entry name" value="SH2"/>
    <property type="match status" value="1"/>
</dbReference>
<dbReference type="SUPFAM" id="SSF55550">
    <property type="entry name" value="SH2 domain"/>
    <property type="match status" value="1"/>
</dbReference>
<dbReference type="PROSITE" id="PS50001">
    <property type="entry name" value="SH2"/>
    <property type="match status" value="1"/>
</dbReference>
<protein>
    <recommendedName>
        <fullName>SH2 domain-containing adapter protein F</fullName>
    </recommendedName>
</protein>
<name>SHF_MOUSE</name>